<reference key="1">
    <citation type="journal article" date="1989" name="Gene">
        <title>Nucleotide sequence of the F plasmid transfer gene, traH: identification of a new gene and a promoter within the transfer operon.</title>
        <authorList>
            <person name="Ham L.M."/>
            <person name="Firth N."/>
            <person name="Skurray R.A."/>
        </authorList>
    </citation>
    <scope>NUCLEOTIDE SEQUENCE [GENOMIC DNA]</scope>
    <source>
        <strain>K12</strain>
    </source>
</reference>
<reference key="2">
    <citation type="journal article" date="1994" name="Microbiol. Rev.">
        <title>Analysis of the sequence and gene products of the transfer region of the F sex factor.</title>
        <authorList>
            <person name="Frost L.S."/>
            <person name="Ippen-Ihler K."/>
            <person name="Skurray R.A."/>
        </authorList>
    </citation>
    <scope>NUCLEOTIDE SEQUENCE [GENOMIC DNA]</scope>
</reference>
<reference key="3">
    <citation type="submission" date="2000-04" db="EMBL/GenBank/DDBJ databases">
        <title>Complete nucleotide sequence of the F plasmid: its implications for organization and diversification of plasmid genomes.</title>
        <authorList>
            <person name="Shimizu H."/>
            <person name="Saitoh Y."/>
            <person name="Suda Y."/>
            <person name="Uehara K."/>
            <person name="Sampei G."/>
            <person name="Mizobuchi K."/>
        </authorList>
    </citation>
    <scope>NUCLEOTIDE SEQUENCE [LARGE SCALE GENOMIC DNA]</scope>
    <source>
        <strain>K12 / CR63</strain>
    </source>
</reference>
<reference key="4">
    <citation type="journal article" date="1989" name="J. Bacteriol.">
        <title>Nucleotide sequence of traQ and adjacent loci in the Escherichia coli K-12 F-plasmid transfer operon.</title>
        <authorList>
            <person name="Wu J.H."/>
            <person name="Ippen-Ihler K."/>
        </authorList>
    </citation>
    <scope>NUCLEOTIDE SEQUENCE [GENOMIC DNA] OF 1-9</scope>
    <source>
        <strain>K12</strain>
    </source>
</reference>
<gene>
    <name type="primary">trbF</name>
    <name type="ordered locus">ECOK12F097</name>
</gene>
<feature type="chain" id="PRO_0000068490" description="Protein TrbF">
    <location>
        <begin position="1"/>
        <end position="126"/>
    </location>
</feature>
<feature type="transmembrane region" description="Helical" evidence="1">
    <location>
        <begin position="31"/>
        <end position="54"/>
    </location>
</feature>
<feature type="transmembrane region" description="Helical" evidence="1">
    <location>
        <begin position="71"/>
        <end position="98"/>
    </location>
</feature>
<sequence>MRENKSNPELKIRSTERDYKYISRITGRYAGLSLVFLTAGIVLWTVMDIIFDACIDSWKADPELNNSSYMWNILIYAIPYTLYALAAGFLVTFFSVPNVRINIRKYRDIPAEMSYAPGEHIKGGQE</sequence>
<protein>
    <recommendedName>
        <fullName>Protein TrbF</fullName>
    </recommendedName>
</protein>
<name>TRBF_ECOLI</name>
<proteinExistence type="predicted"/>
<comment type="subcellular location">
    <subcellularLocation>
        <location evidence="2">Cell inner membrane</location>
        <topology evidence="2">Multi-pass membrane protein</topology>
    </subcellularLocation>
</comment>
<dbReference type="EMBL" id="M24492">
    <property type="protein sequence ID" value="AAA98093.1"/>
    <property type="molecule type" value="Genomic_DNA"/>
</dbReference>
<dbReference type="EMBL" id="U01159">
    <property type="protein sequence ID" value="AAC44208.1"/>
    <property type="molecule type" value="Genomic_DNA"/>
</dbReference>
<dbReference type="EMBL" id="M20787">
    <property type="protein sequence ID" value="AAC63069.1"/>
    <property type="molecule type" value="Genomic_DNA"/>
</dbReference>
<dbReference type="EMBL" id="AP001918">
    <property type="protein sequence ID" value="BAA97967.1"/>
    <property type="molecule type" value="Genomic_DNA"/>
</dbReference>
<dbReference type="EMBL" id="M59763">
    <property type="protein sequence ID" value="AAA98079.1"/>
    <property type="molecule type" value="Genomic_DNA"/>
</dbReference>
<dbReference type="PIR" id="JS0124">
    <property type="entry name" value="BVECTF"/>
</dbReference>
<dbReference type="RefSeq" id="NP_061476.1">
    <property type="nucleotide sequence ID" value="NC_002483.1"/>
</dbReference>
<dbReference type="RefSeq" id="WP_001366201.1">
    <property type="nucleotide sequence ID" value="NZ_JACEFS010000047.1"/>
</dbReference>
<dbReference type="SMR" id="P15068"/>
<dbReference type="KEGG" id="ecoc:C3026_24585"/>
<dbReference type="PATRIC" id="fig|83333.107.peg.615"/>
<dbReference type="GO" id="GO:0005886">
    <property type="term" value="C:plasma membrane"/>
    <property type="evidence" value="ECO:0007669"/>
    <property type="project" value="UniProtKB-SubCell"/>
</dbReference>
<dbReference type="InterPro" id="IPR016386">
    <property type="entry name" value="Plasmid_mob_TrbF"/>
</dbReference>
<dbReference type="NCBIfam" id="NF010306">
    <property type="entry name" value="PRK13743.1"/>
    <property type="match status" value="1"/>
</dbReference>
<dbReference type="PIRSF" id="PIRSF003271">
    <property type="entry name" value="Plasmib_mob_TrbF"/>
    <property type="match status" value="1"/>
</dbReference>
<organism>
    <name type="scientific">Escherichia coli (strain K12)</name>
    <dbReference type="NCBI Taxonomy" id="83333"/>
    <lineage>
        <taxon>Bacteria</taxon>
        <taxon>Pseudomonadati</taxon>
        <taxon>Pseudomonadota</taxon>
        <taxon>Gammaproteobacteria</taxon>
        <taxon>Enterobacterales</taxon>
        <taxon>Enterobacteriaceae</taxon>
        <taxon>Escherichia</taxon>
    </lineage>
</organism>
<evidence type="ECO:0000255" key="1"/>
<evidence type="ECO:0000305" key="2"/>
<geneLocation type="plasmid">
    <name>F</name>
</geneLocation>
<accession>P15068</accession>
<keyword id="KW-0997">Cell inner membrane</keyword>
<keyword id="KW-1003">Cell membrane</keyword>
<keyword id="KW-0184">Conjugation</keyword>
<keyword id="KW-0472">Membrane</keyword>
<keyword id="KW-0614">Plasmid</keyword>
<keyword id="KW-0812">Transmembrane</keyword>
<keyword id="KW-1133">Transmembrane helix</keyword>